<sequence length="239" mass="26429">MMRKMLLAAALSVTAMTAHADYQCSVTPRDDVIVSPQTVQVKGENGNLVITPDGNVMYNGKQYSLNAAQREQAKDYQAELRSTLPWIDEGAKSRVEKARIALDKIIVQEMGESSKMRSRLTKLDAQLKEQMNRIIETRSDGLTFHYKAIDQVRAEGQQLVNQAMGGILQDSINEMGAKAVLKSGGNPLQNVLGSLGGLQSSIQTEWKKQEKDFQQFGKDVCSRVVTLEDSRKALVGNLK</sequence>
<proteinExistence type="predicted"/>
<reference key="1">
    <citation type="journal article" date="1997" name="Science">
        <title>The complete genome sequence of Escherichia coli K-12.</title>
        <authorList>
            <person name="Blattner F.R."/>
            <person name="Plunkett G. III"/>
            <person name="Bloch C.A."/>
            <person name="Perna N.T."/>
            <person name="Burland V."/>
            <person name="Riley M."/>
            <person name="Collado-Vides J."/>
            <person name="Glasner J.D."/>
            <person name="Rode C.K."/>
            <person name="Mayhew G.F."/>
            <person name="Gregor J."/>
            <person name="Davis N.W."/>
            <person name="Kirkpatrick H.A."/>
            <person name="Goeden M.A."/>
            <person name="Rose D.J."/>
            <person name="Mau B."/>
            <person name="Shao Y."/>
        </authorList>
    </citation>
    <scope>NUCLEOTIDE SEQUENCE [LARGE SCALE GENOMIC DNA]</scope>
    <source>
        <strain>K12 / MG1655 / ATCC 47076</strain>
    </source>
</reference>
<reference key="2">
    <citation type="journal article" date="2006" name="Mol. Syst. Biol.">
        <title>Highly accurate genome sequences of Escherichia coli K-12 strains MG1655 and W3110.</title>
        <authorList>
            <person name="Hayashi K."/>
            <person name="Morooka N."/>
            <person name="Yamamoto Y."/>
            <person name="Fujita K."/>
            <person name="Isono K."/>
            <person name="Choi S."/>
            <person name="Ohtsubo E."/>
            <person name="Baba T."/>
            <person name="Wanner B.L."/>
            <person name="Mori H."/>
            <person name="Horiuchi T."/>
        </authorList>
    </citation>
    <scope>NUCLEOTIDE SEQUENCE [LARGE SCALE GENOMIC DNA]</scope>
    <source>
        <strain>K12 / W3110 / ATCC 27325 / DSM 5911</strain>
    </source>
</reference>
<reference key="3">
    <citation type="journal article" date="1990" name="J. Bacteriol.">
        <title>Analysis of the Escherichia coli gene encoding L-asparaginase II, ansB, and its regulation by cyclic AMP receptor and FNR proteins.</title>
        <authorList>
            <person name="Jennings M.P."/>
            <person name="Beacham I.R."/>
        </authorList>
    </citation>
    <scope>NUCLEOTIDE SEQUENCE [GENOMIC DNA] OF 175-239</scope>
</reference>
<reference key="4">
    <citation type="journal article" date="1990" name="Gene">
        <title>L-asparaginase II of Escherichia coli K-12: cloning, mapping and sequencing of the ansB gene.</title>
        <authorList>
            <person name="Bonthron D.T."/>
        </authorList>
    </citation>
    <scope>NUCLEOTIDE SEQUENCE [GENOMIC DNA] OF 185-239</scope>
    <source>
        <strain>K12</strain>
    </source>
</reference>
<reference key="5">
    <citation type="journal article" date="1995" name="Nucleic Acids Res.">
        <title>Detection of new genes in a bacterial genome using Markov models for three gene classes.</title>
        <authorList>
            <person name="Borodovsky M."/>
            <person name="McIninch J."/>
            <person name="Koonin E.V."/>
            <person name="Rudd K.E."/>
            <person name="Medigue C."/>
            <person name="Danchin A."/>
        </authorList>
    </citation>
    <scope>IDENTIFICATION</scope>
</reference>
<keyword id="KW-1185">Reference proteome</keyword>
<evidence type="ECO:0000305" key="1"/>
<dbReference type="EMBL" id="U28377">
    <property type="protein sequence ID" value="AAA69125.1"/>
    <property type="molecule type" value="Genomic_DNA"/>
</dbReference>
<dbReference type="EMBL" id="U00096">
    <property type="protein sequence ID" value="AAC75995.1"/>
    <property type="molecule type" value="Genomic_DNA"/>
</dbReference>
<dbReference type="EMBL" id="AP009048">
    <property type="protein sequence ID" value="BAE77021.1"/>
    <property type="molecule type" value="Genomic_DNA"/>
</dbReference>
<dbReference type="EMBL" id="M34277">
    <property type="status" value="NOT_ANNOTATED_CDS"/>
    <property type="molecule type" value="Genomic_DNA"/>
</dbReference>
<dbReference type="EMBL" id="M34234">
    <property type="status" value="NOT_ANNOTATED_CDS"/>
    <property type="molecule type" value="Genomic_DNA"/>
</dbReference>
<dbReference type="PIR" id="E65081">
    <property type="entry name" value="E65081"/>
</dbReference>
<dbReference type="RefSeq" id="NP_417433.1">
    <property type="nucleotide sequence ID" value="NC_000913.3"/>
</dbReference>
<dbReference type="RefSeq" id="WP_000984796.1">
    <property type="nucleotide sequence ID" value="NZ_STEB01000001.1"/>
</dbReference>
<dbReference type="SMR" id="P0ADS9"/>
<dbReference type="BioGRID" id="4259244">
    <property type="interactions" value="10"/>
</dbReference>
<dbReference type="FunCoup" id="P0ADS9">
    <property type="interactions" value="11"/>
</dbReference>
<dbReference type="IntAct" id="P0ADS9">
    <property type="interactions" value="2"/>
</dbReference>
<dbReference type="STRING" id="511145.b2958"/>
<dbReference type="jPOST" id="P0ADS9"/>
<dbReference type="PaxDb" id="511145-b2958"/>
<dbReference type="EnsemblBacteria" id="AAC75995">
    <property type="protein sequence ID" value="AAC75995"/>
    <property type="gene ID" value="b2958"/>
</dbReference>
<dbReference type="GeneID" id="947453"/>
<dbReference type="KEGG" id="ecj:JW2925"/>
<dbReference type="KEGG" id="eco:b2958"/>
<dbReference type="KEGG" id="ecoc:C3026_16185"/>
<dbReference type="PATRIC" id="fig|511145.12.peg.3052"/>
<dbReference type="EchoBASE" id="EB2567"/>
<dbReference type="eggNOG" id="ENOG502Z7J1">
    <property type="taxonomic scope" value="Bacteria"/>
</dbReference>
<dbReference type="HOGENOM" id="CLU_1159649_0_0_6"/>
<dbReference type="InParanoid" id="P0ADS9"/>
<dbReference type="OMA" id="PLQAMMG"/>
<dbReference type="OrthoDB" id="7057921at2"/>
<dbReference type="PhylomeDB" id="P0ADS9"/>
<dbReference type="BioCyc" id="EcoCyc:EG12705-MONOMER"/>
<dbReference type="PRO" id="PR:P0ADS9"/>
<dbReference type="Proteomes" id="UP000000625">
    <property type="component" value="Chromosome"/>
</dbReference>
<dbReference type="GO" id="GO:0044010">
    <property type="term" value="P:single-species biofilm formation"/>
    <property type="evidence" value="ECO:0000315"/>
    <property type="project" value="EcoCyc"/>
</dbReference>
<dbReference type="InterPro" id="IPR021307">
    <property type="entry name" value="DUF2884"/>
</dbReference>
<dbReference type="NCBIfam" id="NF007913">
    <property type="entry name" value="PRK10626.1"/>
    <property type="match status" value="1"/>
</dbReference>
<dbReference type="Pfam" id="PF11101">
    <property type="entry name" value="DUF2884"/>
    <property type="match status" value="1"/>
</dbReference>
<protein>
    <recommendedName>
        <fullName>Uncharacterized protein YggN</fullName>
    </recommendedName>
</protein>
<accession>P0ADS9</accession>
<accession>P46143</accession>
<accession>Q2M9N5</accession>
<gene>
    <name type="primary">yggN</name>
    <name type="ordered locus">b2958</name>
    <name type="ordered locus">JW2925</name>
</gene>
<name>YGGN_ECOLI</name>
<organism>
    <name type="scientific">Escherichia coli (strain K12)</name>
    <dbReference type="NCBI Taxonomy" id="83333"/>
    <lineage>
        <taxon>Bacteria</taxon>
        <taxon>Pseudomonadati</taxon>
        <taxon>Pseudomonadota</taxon>
        <taxon>Gammaproteobacteria</taxon>
        <taxon>Enterobacterales</taxon>
        <taxon>Enterobacteriaceae</taxon>
        <taxon>Escherichia</taxon>
    </lineage>
</organism>
<feature type="chain" id="PRO_0000169371" description="Uncharacterized protein YggN">
    <location>
        <begin position="1"/>
        <end position="239"/>
    </location>
</feature>
<feature type="sequence conflict" description="In Ref. 3." evidence="1" ref="3">
    <original>L</original>
    <variation>LGSL</variation>
    <location>
        <position position="195"/>
    </location>
</feature>